<reference key="1">
    <citation type="journal article" date="2021" name="Int. J. Biol. Macromol.">
        <title>Unraveling the structure and function of CdcPDE: A novel phosphodiesterase from Crotalus durissus collilineatus snake venom.</title>
        <authorList>
            <person name="Oliveira I.S."/>
            <person name="Pucca M.B."/>
            <person name="Wiezel G.A."/>
            <person name="Cardoso I.A."/>
            <person name="Bordon K.C.F."/>
            <person name="Sartim M.A."/>
            <person name="Kalogeropoulos K."/>
            <person name="Ahmadi S."/>
            <person name="Baiwir D."/>
            <person name="Nonato M.C."/>
            <person name="Sampaio S.V."/>
            <person name="Laustsen A.H."/>
            <person name="Auf dem Keller U."/>
            <person name="Quinton L."/>
            <person name="Arantes E.C."/>
        </authorList>
    </citation>
    <scope>PROTEIN SEQUENCE</scope>
    <scope>FUNCTION</scope>
    <scope>SUBCELLULAR LOCATION</scope>
    <scope>BIOPHYSICOCHEMICAL PROPERTIES</scope>
    <scope>3D-STRUCTURE MODELING</scope>
    <scope>SUBUNIT</scope>
    <scope>MASS SPECTROMETRY</scope>
    <scope>GLYCOSYLATION AT ASN-194 AND ASN-237</scope>
    <source>
        <tissue>Venom</tissue>
    </source>
</reference>
<organism>
    <name type="scientific">Crotalus durissus collilineatus</name>
    <name type="common">Brazilian rattlesnake</name>
    <dbReference type="NCBI Taxonomy" id="221569"/>
    <lineage>
        <taxon>Eukaryota</taxon>
        <taxon>Metazoa</taxon>
        <taxon>Chordata</taxon>
        <taxon>Craniata</taxon>
        <taxon>Vertebrata</taxon>
        <taxon>Euteleostomi</taxon>
        <taxon>Lepidosauria</taxon>
        <taxon>Squamata</taxon>
        <taxon>Bifurcata</taxon>
        <taxon>Unidentata</taxon>
        <taxon>Episquamata</taxon>
        <taxon>Toxicofera</taxon>
        <taxon>Serpentes</taxon>
        <taxon>Colubroidea</taxon>
        <taxon>Viperidae</taxon>
        <taxon>Crotalinae</taxon>
        <taxon>Crotalus</taxon>
    </lineage>
</organism>
<evidence type="ECO:0000250" key="1">
    <source>
        <dbReference type="UniProtKB" id="A0A2D0TC04"/>
    </source>
</evidence>
<evidence type="ECO:0000250" key="2">
    <source>
        <dbReference type="UniProtKB" id="W8E7D1"/>
    </source>
</evidence>
<evidence type="ECO:0000255" key="3"/>
<evidence type="ECO:0000255" key="4">
    <source>
        <dbReference type="PROSITE-ProRule" id="PRU00350"/>
    </source>
</evidence>
<evidence type="ECO:0000255" key="5">
    <source>
        <dbReference type="PROSITE-ProRule" id="PRU00498"/>
    </source>
</evidence>
<evidence type="ECO:0000269" key="6">
    <source>
    </source>
</evidence>
<evidence type="ECO:0000303" key="7">
    <source>
    </source>
</evidence>
<evidence type="ECO:0000305" key="8"/>
<evidence type="ECO:0000305" key="9">
    <source>
    </source>
</evidence>
<comment type="function">
    <text evidence="2 6">Hydrolyzes ADP with high activity. Shows weak or no activity on 5'-AMP, 5'-GMP, 3'-AMP, ATP, cAMP, and cGMP (By similarity). Is devoid of monophosphatase and proteinase activities (By similarity). Inhibits ADP-induced platelet aggregation and is cytotoxic to human keratinocytes (PubMed:33636276). Kinetic parameters indicated a higher affinity for the substrate bis(p-nitrophenyl) phosphate compared to others snake venom PDEs (PubMed:33636276). Is recognized by the crotalid antivenom produced by the Instituto Butantan (PubMed:33636276).</text>
</comment>
<comment type="catalytic activity">
    <reaction evidence="2">
        <text>ADP + H2O = AMP + phosphate + H(+)</text>
        <dbReference type="Rhea" id="RHEA:61436"/>
        <dbReference type="ChEBI" id="CHEBI:15377"/>
        <dbReference type="ChEBI" id="CHEBI:15378"/>
        <dbReference type="ChEBI" id="CHEBI:43474"/>
        <dbReference type="ChEBI" id="CHEBI:456215"/>
        <dbReference type="ChEBI" id="CHEBI:456216"/>
    </reaction>
</comment>
<comment type="cofactor">
    <cofactor evidence="2">
        <name>a divalent metal cation</name>
        <dbReference type="ChEBI" id="CHEBI:60240"/>
    </cofactor>
    <text evidence="2">Binds 2 divalent metal cations per subunit.</text>
</comment>
<comment type="biophysicochemical properties">
    <kinetics>
        <KM evidence="6">0.38 mM for bis(p-nitrophenyl) phosphate</KM>
    </kinetics>
    <phDependence>
        <text evidence="6">Optimum pH is 8.0-8.5.</text>
    </phDependence>
    <temperatureDependence>
        <text evidence="6">Optimum temperature is 37 degrees Celsius.</text>
    </temperatureDependence>
</comment>
<comment type="subunit">
    <text evidence="6">Monomer.</text>
</comment>
<comment type="subcellular location">
    <subcellularLocation>
        <location evidence="6">Secreted</location>
    </subcellularLocation>
</comment>
<comment type="tissue specificity">
    <text evidence="9">Expressed by venom gland.</text>
</comment>
<comment type="PTM">
    <text evidence="6">N-glycosylated. Glycosylation counts for an increased mass of ~9%.</text>
</comment>
<comment type="PTM">
    <text evidence="9">Contains 16 disulfide bonds.</text>
</comment>
<comment type="mass spectrometry" mass="100330.0" method="MALDI" evidence="6">
    <text>Isoform/Glycoform-1.</text>
</comment>
<comment type="mass spectrometry" mass="105598.0" method="MALDI" evidence="6">
    <text>Isoform/Glycoform-2.</text>
</comment>
<comment type="similarity">
    <text evidence="8">Belongs to the nucleotide pyrophosphatase/phosphodiesterase family.</text>
</comment>
<protein>
    <recommendedName>
        <fullName evidence="7">Venom phosphodiesterase CdcPDE</fullName>
        <shortName>PDE</shortName>
        <ecNumber evidence="2">3.6.1.-</ecNumber>
    </recommendedName>
</protein>
<feature type="chain" id="PRO_0000453027" description="Venom phosphodiesterase CdcPDE" evidence="6">
    <location>
        <begin position="1"/>
        <end position="829"/>
    </location>
</feature>
<feature type="domain" description="SMB 1" evidence="4">
    <location>
        <begin position="8"/>
        <end position="51"/>
    </location>
</feature>
<feature type="domain" description="SMB 2" evidence="4">
    <location>
        <begin position="52"/>
        <end position="96"/>
    </location>
</feature>
<feature type="short sequence motif" description="Cell attachment site" evidence="3">
    <location>
        <begin position="36"/>
        <end position="38"/>
    </location>
</feature>
<feature type="active site" description="AMP-threonine intermediate" evidence="1 9">
    <location>
        <position position="163"/>
    </location>
</feature>
<feature type="binding site" evidence="1 9">
    <location>
        <position position="125"/>
    </location>
    <ligand>
        <name>a divalent metal cation</name>
        <dbReference type="ChEBI" id="CHEBI:60240"/>
        <label>2</label>
    </ligand>
</feature>
<feature type="binding site" evidence="1 9">
    <location>
        <position position="163"/>
    </location>
    <ligand>
        <name>a divalent metal cation</name>
        <dbReference type="ChEBI" id="CHEBI:60240"/>
        <label>2</label>
    </ligand>
</feature>
<feature type="binding site" evidence="1">
    <location>
        <position position="249"/>
    </location>
    <ligand>
        <name>AMP</name>
        <dbReference type="ChEBI" id="CHEBI:456215"/>
    </ligand>
</feature>
<feature type="binding site" evidence="1 9">
    <location>
        <position position="283"/>
    </location>
    <ligand>
        <name>a divalent metal cation</name>
        <dbReference type="ChEBI" id="CHEBI:60240"/>
        <label>1</label>
    </ligand>
</feature>
<feature type="binding site" evidence="1 9">
    <location>
        <position position="287"/>
    </location>
    <ligand>
        <name>a divalent metal cation</name>
        <dbReference type="ChEBI" id="CHEBI:60240"/>
        <label>1</label>
    </ligand>
</feature>
<feature type="binding site" evidence="1">
    <location>
        <position position="287"/>
    </location>
    <ligand>
        <name>AMP</name>
        <dbReference type="ChEBI" id="CHEBI:456215"/>
    </ligand>
</feature>
<feature type="binding site" evidence="1 9">
    <location>
        <position position="330"/>
    </location>
    <ligand>
        <name>a divalent metal cation</name>
        <dbReference type="ChEBI" id="CHEBI:60240"/>
        <label>2</label>
    </ligand>
</feature>
<feature type="binding site" evidence="1">
    <location>
        <position position="331"/>
    </location>
    <ligand>
        <name>a divalent metal cation</name>
        <dbReference type="ChEBI" id="CHEBI:60240"/>
        <label>2</label>
    </ligand>
</feature>
<feature type="binding site" evidence="1 9">
    <location>
        <position position="440"/>
    </location>
    <ligand>
        <name>a divalent metal cation</name>
        <dbReference type="ChEBI" id="CHEBI:60240"/>
        <label>1</label>
    </ligand>
</feature>
<feature type="glycosylation site" description="N-linked (GlcNAc...) asparagine" evidence="5">
    <location>
        <position position="17"/>
    </location>
</feature>
<feature type="glycosylation site" description="N-linked (GlcNAc...) asparagine" evidence="6">
    <location>
        <position position="194"/>
    </location>
</feature>
<feature type="glycosylation site" description="N-linked (GlcNAc...) asparagine" evidence="6">
    <location>
        <position position="237"/>
    </location>
</feature>
<feature type="glycosylation site" description="N-linked (GlcNAc...) asparagine" evidence="5">
    <location>
        <position position="383"/>
    </location>
</feature>
<feature type="glycosylation site" description="N-linked (GlcNAc...) asparagine" evidence="5">
    <location>
        <position position="572"/>
    </location>
</feature>
<feature type="glycosylation site" description="N-linked (GlcNAc...) asparagine" evidence="5">
    <location>
        <position position="652"/>
    </location>
</feature>
<feature type="disulfide bond" description="Alternate" evidence="1">
    <location>
        <begin position="12"/>
        <end position="29"/>
    </location>
</feature>
<feature type="disulfide bond" description="Alternate" evidence="4">
    <location>
        <begin position="12"/>
        <end position="16"/>
    </location>
</feature>
<feature type="disulfide bond" description="Alternate" evidence="1">
    <location>
        <begin position="16"/>
        <end position="47"/>
    </location>
</feature>
<feature type="disulfide bond" description="Alternate" evidence="1">
    <location>
        <begin position="27"/>
        <end position="40"/>
    </location>
</feature>
<feature type="disulfide bond" description="Alternate" evidence="4">
    <location>
        <begin position="27"/>
        <end position="29"/>
    </location>
</feature>
<feature type="disulfide bond" evidence="1">
    <location>
        <begin position="33"/>
        <end position="39"/>
    </location>
</feature>
<feature type="disulfide bond" description="Alternate" evidence="4">
    <location>
        <begin position="40"/>
        <end position="47"/>
    </location>
</feature>
<feature type="disulfide bond" description="Alternate" evidence="1">
    <location>
        <begin position="56"/>
        <end position="73"/>
    </location>
</feature>
<feature type="disulfide bond" description="Alternate" evidence="4">
    <location>
        <begin position="56"/>
        <end position="61"/>
    </location>
</feature>
<feature type="disulfide bond" description="Alternate" evidence="1">
    <location>
        <begin position="61"/>
        <end position="91"/>
    </location>
</feature>
<feature type="disulfide bond" description="Alternate" evidence="1">
    <location>
        <begin position="71"/>
        <end position="84"/>
    </location>
</feature>
<feature type="disulfide bond" description="Alternate" evidence="4">
    <location>
        <begin position="71"/>
        <end position="73"/>
    </location>
</feature>
<feature type="disulfide bond" evidence="1">
    <location>
        <begin position="77"/>
        <end position="83"/>
    </location>
</feature>
<feature type="disulfide bond" description="Alternate" evidence="4">
    <location>
        <begin position="84"/>
        <end position="91"/>
    </location>
</feature>
<feature type="disulfide bond" evidence="1">
    <location>
        <begin position="102"/>
        <end position="148"/>
    </location>
</feature>
<feature type="disulfide bond" evidence="1">
    <location>
        <begin position="110"/>
        <end position="322"/>
    </location>
</feature>
<feature type="disulfide bond" evidence="1">
    <location>
        <begin position="338"/>
        <end position="435"/>
    </location>
</feature>
<feature type="disulfide bond" evidence="1">
    <location>
        <begin position="386"/>
        <end position="771"/>
    </location>
</feature>
<feature type="disulfide bond" evidence="1">
    <location>
        <begin position="519"/>
        <end position="577"/>
    </location>
</feature>
<feature type="disulfide bond" evidence="1">
    <location>
        <begin position="532"/>
        <end position="632"/>
    </location>
</feature>
<feature type="disulfide bond" evidence="1">
    <location>
        <begin position="534"/>
        <end position="617"/>
    </location>
</feature>
<feature type="disulfide bond" evidence="1">
    <location>
        <begin position="740"/>
        <end position="750"/>
    </location>
</feature>
<name>PDE_CRODO</name>
<accession>P0DQQ4</accession>
<keyword id="KW-0903">Direct protein sequencing</keyword>
<keyword id="KW-1015">Disulfide bond</keyword>
<keyword id="KW-0325">Glycoprotein</keyword>
<keyword id="KW-1199">Hemostasis impairing toxin</keyword>
<keyword id="KW-0378">Hydrolase</keyword>
<keyword id="KW-0479">Metal-binding</keyword>
<keyword id="KW-1201">Platelet aggregation inhibiting toxin</keyword>
<keyword id="KW-0677">Repeat</keyword>
<keyword id="KW-0964">Secreted</keyword>
<keyword id="KW-0800">Toxin</keyword>
<sequence length="829" mass="94154">GLKEPVQPQVSCRYRCNETFSRMASGCSCDDKCTERQACCSDYEDTCVLPTQSWSCSKLRCGEKRIANVLCSCSEDCLEKKDCCTDYKTICKGETSWLKDKCASSGATQCPAGFEQSPLILFSMDGFRAGYLENWDSLMPNINKLKTCGTHAKYMRAVYPTKTFVNHYTIATGLYPESHGIIDNNIYDVNLNLNFSLSSSTARNPAWWGGQPIWHTATYQGLKAATYFWPGSEVKINGSYPTIFKNYDKSIPFEARVTEVLKWLDLPKAKRPDFFTLYIEEPDTTGHKYGPVSGEIIKALQMADRTLGMLMEGLKQRNLHNCVNLILLADHGMEEISCDRLEYMANYFDNVDFFMYEGPAPRIRSKNVPKDFYTFDSEGIVKNLTCRKPKQYFKAYLSKDLPKRLHYANNIRIDKVNLMVDQQWMAVRDKKFTRCKGGTHGYDNEFKSMQAIFLAHGPGFNEKNEVTSFENIEVYNLMCDLLKLKPAPNDGTHGSLNHLLKNPFYTPSPAKEQSSPLSCPFGPVPSPDVSGCKCSSITELEKVNQRLNLNNQAKTESEAHNLPYGRPQVLQNHSKYCLLHQAKYISAYSQDILMPLWSSYTIYRSTSTSVPPSASDCLRLDVRIPAAQSQTCSNYQPDLTITPGFLYPPNFNSSNFEQYDALITSNIVPMFKGFTRLWNYFHTTLIPKYARERDGLNVISGPIFDYNYDGHFDSYDTIKQHVSNTKIPIPTHYFVVLTSCENQINTPLNCLGPLKVLSFILPHRPDNSESCADTSPENLWVEERIQIHTARVRDVELLTGLNFYSGLKQPLPETLQLKTFLPIFVNPVN</sequence>
<proteinExistence type="evidence at protein level"/>
<dbReference type="EC" id="3.6.1.-" evidence="2"/>
<dbReference type="SMR" id="P0DQQ4"/>
<dbReference type="iPTMnet" id="P0DQQ4"/>
<dbReference type="SABIO-RK" id="P0DQQ4"/>
<dbReference type="GO" id="GO:0005576">
    <property type="term" value="C:extracellular region"/>
    <property type="evidence" value="ECO:0007669"/>
    <property type="project" value="UniProtKB-SubCell"/>
</dbReference>
<dbReference type="GO" id="GO:0046872">
    <property type="term" value="F:metal ion binding"/>
    <property type="evidence" value="ECO:0007669"/>
    <property type="project" value="UniProtKB-KW"/>
</dbReference>
<dbReference type="GO" id="GO:0003676">
    <property type="term" value="F:nucleic acid binding"/>
    <property type="evidence" value="ECO:0007669"/>
    <property type="project" value="InterPro"/>
</dbReference>
<dbReference type="GO" id="GO:0047429">
    <property type="term" value="F:nucleoside triphosphate diphosphatase activity"/>
    <property type="evidence" value="ECO:0007669"/>
    <property type="project" value="TreeGrafter"/>
</dbReference>
<dbReference type="GO" id="GO:0090729">
    <property type="term" value="F:toxin activity"/>
    <property type="evidence" value="ECO:0007669"/>
    <property type="project" value="UniProtKB-KW"/>
</dbReference>
<dbReference type="GO" id="GO:0009143">
    <property type="term" value="P:nucleoside triphosphate catabolic process"/>
    <property type="evidence" value="ECO:0007669"/>
    <property type="project" value="TreeGrafter"/>
</dbReference>
<dbReference type="CDD" id="cd16018">
    <property type="entry name" value="Enpp"/>
    <property type="match status" value="1"/>
</dbReference>
<dbReference type="CDD" id="cd00091">
    <property type="entry name" value="NUC"/>
    <property type="match status" value="1"/>
</dbReference>
<dbReference type="FunFam" id="4.10.410.20:FF:000001">
    <property type="entry name" value="Ectonucleotide pyrophosphatase/phosphodiesterase family member 2"/>
    <property type="match status" value="1"/>
</dbReference>
<dbReference type="Gene3D" id="4.10.410.20">
    <property type="match status" value="2"/>
</dbReference>
<dbReference type="Gene3D" id="3.40.720.10">
    <property type="entry name" value="Alkaline Phosphatase, subunit A"/>
    <property type="match status" value="1"/>
</dbReference>
<dbReference type="Gene3D" id="3.40.570.10">
    <property type="entry name" value="Extracellular Endonuclease, subunit A"/>
    <property type="match status" value="1"/>
</dbReference>
<dbReference type="InterPro" id="IPR017850">
    <property type="entry name" value="Alkaline_phosphatase_core_sf"/>
</dbReference>
<dbReference type="InterPro" id="IPR044929">
    <property type="entry name" value="DNA/RNA_non-sp_Endonuclease_sf"/>
</dbReference>
<dbReference type="InterPro" id="IPR001604">
    <property type="entry name" value="Endo_G_ENPP1-like_dom"/>
</dbReference>
<dbReference type="InterPro" id="IPR020821">
    <property type="entry name" value="ENPP1-3/EXOG-like_nuc-like"/>
</dbReference>
<dbReference type="InterPro" id="IPR044925">
    <property type="entry name" value="His-Me_finger_sf"/>
</dbReference>
<dbReference type="InterPro" id="IPR002591">
    <property type="entry name" value="Phosphodiest/P_Trfase"/>
</dbReference>
<dbReference type="InterPro" id="IPR036024">
    <property type="entry name" value="Somatomedin_B-like_dom_sf"/>
</dbReference>
<dbReference type="InterPro" id="IPR001212">
    <property type="entry name" value="Somatomedin_B_dom"/>
</dbReference>
<dbReference type="PANTHER" id="PTHR10151">
    <property type="entry name" value="ECTONUCLEOTIDE PYROPHOSPHATASE/PHOSPHODIESTERASE"/>
    <property type="match status" value="1"/>
</dbReference>
<dbReference type="PANTHER" id="PTHR10151:SF107">
    <property type="entry name" value="ECTONUCLEOTIDE PYROPHOSPHATASE_PHOSPHODIESTERASE FAMILY MEMBER 3"/>
    <property type="match status" value="1"/>
</dbReference>
<dbReference type="Pfam" id="PF01223">
    <property type="entry name" value="Endonuclease_NS"/>
    <property type="match status" value="1"/>
</dbReference>
<dbReference type="Pfam" id="PF01663">
    <property type="entry name" value="Phosphodiest"/>
    <property type="match status" value="1"/>
</dbReference>
<dbReference type="Pfam" id="PF01033">
    <property type="entry name" value="Somatomedin_B"/>
    <property type="match status" value="2"/>
</dbReference>
<dbReference type="SMART" id="SM00892">
    <property type="entry name" value="Endonuclease_NS"/>
    <property type="match status" value="1"/>
</dbReference>
<dbReference type="SMART" id="SM00477">
    <property type="entry name" value="NUC"/>
    <property type="match status" value="1"/>
</dbReference>
<dbReference type="SMART" id="SM00201">
    <property type="entry name" value="SO"/>
    <property type="match status" value="2"/>
</dbReference>
<dbReference type="SUPFAM" id="SSF53649">
    <property type="entry name" value="Alkaline phosphatase-like"/>
    <property type="match status" value="1"/>
</dbReference>
<dbReference type="SUPFAM" id="SSF54060">
    <property type="entry name" value="His-Me finger endonucleases"/>
    <property type="match status" value="1"/>
</dbReference>
<dbReference type="SUPFAM" id="SSF90188">
    <property type="entry name" value="Somatomedin B domain"/>
    <property type="match status" value="2"/>
</dbReference>
<dbReference type="PROSITE" id="PS00524">
    <property type="entry name" value="SMB_1"/>
    <property type="match status" value="2"/>
</dbReference>
<dbReference type="PROSITE" id="PS50958">
    <property type="entry name" value="SMB_2"/>
    <property type="match status" value="2"/>
</dbReference>